<comment type="catalytic activity">
    <reaction evidence="1">
        <text>tRNA(His) + L-histidine + ATP = L-histidyl-tRNA(His) + AMP + diphosphate + H(+)</text>
        <dbReference type="Rhea" id="RHEA:17313"/>
        <dbReference type="Rhea" id="RHEA-COMP:9665"/>
        <dbReference type="Rhea" id="RHEA-COMP:9689"/>
        <dbReference type="ChEBI" id="CHEBI:15378"/>
        <dbReference type="ChEBI" id="CHEBI:30616"/>
        <dbReference type="ChEBI" id="CHEBI:33019"/>
        <dbReference type="ChEBI" id="CHEBI:57595"/>
        <dbReference type="ChEBI" id="CHEBI:78442"/>
        <dbReference type="ChEBI" id="CHEBI:78527"/>
        <dbReference type="ChEBI" id="CHEBI:456215"/>
        <dbReference type="EC" id="6.1.1.21"/>
    </reaction>
</comment>
<comment type="subunit">
    <text evidence="1">Homodimer.</text>
</comment>
<comment type="subcellular location">
    <subcellularLocation>
        <location evidence="1">Cytoplasm</location>
    </subcellularLocation>
</comment>
<comment type="similarity">
    <text evidence="1">Belongs to the class-II aminoacyl-tRNA synthetase family.</text>
</comment>
<organism>
    <name type="scientific">Oceanobacillus iheyensis (strain DSM 14371 / CIP 107618 / JCM 11309 / KCTC 3954 / HTE831)</name>
    <dbReference type="NCBI Taxonomy" id="221109"/>
    <lineage>
        <taxon>Bacteria</taxon>
        <taxon>Bacillati</taxon>
        <taxon>Bacillota</taxon>
        <taxon>Bacilli</taxon>
        <taxon>Bacillales</taxon>
        <taxon>Bacillaceae</taxon>
        <taxon>Oceanobacillus</taxon>
    </lineage>
</organism>
<evidence type="ECO:0000255" key="1">
    <source>
        <dbReference type="HAMAP-Rule" id="MF_00127"/>
    </source>
</evidence>
<dbReference type="EC" id="6.1.1.21" evidence="1"/>
<dbReference type="EMBL" id="BA000028">
    <property type="protein sequence ID" value="BAC13976.1"/>
    <property type="molecule type" value="Genomic_DNA"/>
</dbReference>
<dbReference type="RefSeq" id="WP_011066416.1">
    <property type="nucleotide sequence ID" value="NC_004193.1"/>
</dbReference>
<dbReference type="SMR" id="Q8EPR9"/>
<dbReference type="STRING" id="221109.gene:10734266"/>
<dbReference type="KEGG" id="oih:OB2020"/>
<dbReference type="eggNOG" id="COG0124">
    <property type="taxonomic scope" value="Bacteria"/>
</dbReference>
<dbReference type="HOGENOM" id="CLU_025113_1_1_9"/>
<dbReference type="OrthoDB" id="9800814at2"/>
<dbReference type="PhylomeDB" id="Q8EPR9"/>
<dbReference type="Proteomes" id="UP000000822">
    <property type="component" value="Chromosome"/>
</dbReference>
<dbReference type="GO" id="GO:0005737">
    <property type="term" value="C:cytoplasm"/>
    <property type="evidence" value="ECO:0007669"/>
    <property type="project" value="UniProtKB-SubCell"/>
</dbReference>
<dbReference type="GO" id="GO:0005524">
    <property type="term" value="F:ATP binding"/>
    <property type="evidence" value="ECO:0007669"/>
    <property type="project" value="UniProtKB-UniRule"/>
</dbReference>
<dbReference type="GO" id="GO:0140096">
    <property type="term" value="F:catalytic activity, acting on a protein"/>
    <property type="evidence" value="ECO:0007669"/>
    <property type="project" value="UniProtKB-ARBA"/>
</dbReference>
<dbReference type="GO" id="GO:0004821">
    <property type="term" value="F:histidine-tRNA ligase activity"/>
    <property type="evidence" value="ECO:0007669"/>
    <property type="project" value="UniProtKB-UniRule"/>
</dbReference>
<dbReference type="GO" id="GO:0016740">
    <property type="term" value="F:transferase activity"/>
    <property type="evidence" value="ECO:0007669"/>
    <property type="project" value="UniProtKB-ARBA"/>
</dbReference>
<dbReference type="GO" id="GO:0006427">
    <property type="term" value="P:histidyl-tRNA aminoacylation"/>
    <property type="evidence" value="ECO:0007669"/>
    <property type="project" value="UniProtKB-UniRule"/>
</dbReference>
<dbReference type="CDD" id="cd00773">
    <property type="entry name" value="HisRS-like_core"/>
    <property type="match status" value="1"/>
</dbReference>
<dbReference type="CDD" id="cd00859">
    <property type="entry name" value="HisRS_anticodon"/>
    <property type="match status" value="1"/>
</dbReference>
<dbReference type="FunFam" id="3.30.930.10:FF:000005">
    <property type="entry name" value="Histidine--tRNA ligase"/>
    <property type="match status" value="1"/>
</dbReference>
<dbReference type="Gene3D" id="3.40.50.800">
    <property type="entry name" value="Anticodon-binding domain"/>
    <property type="match status" value="1"/>
</dbReference>
<dbReference type="Gene3D" id="3.30.930.10">
    <property type="entry name" value="Bira Bifunctional Protein, Domain 2"/>
    <property type="match status" value="1"/>
</dbReference>
<dbReference type="HAMAP" id="MF_00127">
    <property type="entry name" value="His_tRNA_synth"/>
    <property type="match status" value="1"/>
</dbReference>
<dbReference type="InterPro" id="IPR006195">
    <property type="entry name" value="aa-tRNA-synth_II"/>
</dbReference>
<dbReference type="InterPro" id="IPR045864">
    <property type="entry name" value="aa-tRNA-synth_II/BPL/LPL"/>
</dbReference>
<dbReference type="InterPro" id="IPR004154">
    <property type="entry name" value="Anticodon-bd"/>
</dbReference>
<dbReference type="InterPro" id="IPR036621">
    <property type="entry name" value="Anticodon-bd_dom_sf"/>
</dbReference>
<dbReference type="InterPro" id="IPR015807">
    <property type="entry name" value="His-tRNA-ligase"/>
</dbReference>
<dbReference type="InterPro" id="IPR041715">
    <property type="entry name" value="HisRS-like_core"/>
</dbReference>
<dbReference type="InterPro" id="IPR004516">
    <property type="entry name" value="HisRS/HisZ"/>
</dbReference>
<dbReference type="InterPro" id="IPR033656">
    <property type="entry name" value="HisRS_anticodon"/>
</dbReference>
<dbReference type="NCBIfam" id="TIGR00442">
    <property type="entry name" value="hisS"/>
    <property type="match status" value="1"/>
</dbReference>
<dbReference type="PANTHER" id="PTHR43707:SF1">
    <property type="entry name" value="HISTIDINE--TRNA LIGASE, MITOCHONDRIAL-RELATED"/>
    <property type="match status" value="1"/>
</dbReference>
<dbReference type="PANTHER" id="PTHR43707">
    <property type="entry name" value="HISTIDYL-TRNA SYNTHETASE"/>
    <property type="match status" value="1"/>
</dbReference>
<dbReference type="Pfam" id="PF03129">
    <property type="entry name" value="HGTP_anticodon"/>
    <property type="match status" value="1"/>
</dbReference>
<dbReference type="Pfam" id="PF13393">
    <property type="entry name" value="tRNA-synt_His"/>
    <property type="match status" value="1"/>
</dbReference>
<dbReference type="PIRSF" id="PIRSF001549">
    <property type="entry name" value="His-tRNA_synth"/>
    <property type="match status" value="1"/>
</dbReference>
<dbReference type="SUPFAM" id="SSF52954">
    <property type="entry name" value="Class II aaRS ABD-related"/>
    <property type="match status" value="1"/>
</dbReference>
<dbReference type="SUPFAM" id="SSF55681">
    <property type="entry name" value="Class II aaRS and biotin synthetases"/>
    <property type="match status" value="1"/>
</dbReference>
<dbReference type="PROSITE" id="PS50862">
    <property type="entry name" value="AA_TRNA_LIGASE_II"/>
    <property type="match status" value="1"/>
</dbReference>
<feature type="chain" id="PRO_0000136213" description="Histidine--tRNA ligase">
    <location>
        <begin position="1"/>
        <end position="429"/>
    </location>
</feature>
<reference key="1">
    <citation type="journal article" date="2002" name="Nucleic Acids Res.">
        <title>Genome sequence of Oceanobacillus iheyensis isolated from the Iheya Ridge and its unexpected adaptive capabilities to extreme environments.</title>
        <authorList>
            <person name="Takami H."/>
            <person name="Takaki Y."/>
            <person name="Uchiyama I."/>
        </authorList>
    </citation>
    <scope>NUCLEOTIDE SEQUENCE [LARGE SCALE GENOMIC DNA]</scope>
    <source>
        <strain>DSM 14371 / CIP 107618 / JCM 11309 / KCTC 3954 / HTE831</strain>
    </source>
</reference>
<gene>
    <name evidence="1" type="primary">hisS</name>
    <name type="ordered locus">OB2020</name>
</gene>
<sequence>MSMKAPRGTVDLLPEQSIKWQFAESKIKEICHNYHYQEIRTPLFEHTEVFQRGVGDTTDIVQKEMYTFEDRGGRSLTLRPEGTASVARAYVENKLFGSPNQPTKLFYFGSMFRYERPQKGRMRQLNQFGTEVIGSEDPAVDAEVMDFAMNIYKSLGLKSVKLVINSLGDQESRESHRNALIQHFEPHREELCHDCQNRLDKNPLRVLDCKKDRDHPAMGTAPKITDFLNEYSKTYFADVMTYLDALDIEYVVDPNLVRGLDYYNHTAFEIMSEAEGFGAITTLAGGGRYNGLVEEFGGPSSPGIGFGMGLERLIMALEAENITLPIDQQLDCFVANMGDESKLEATKVVKRLRDNGIQADMDYQKRKMKGQLKAADRYQSKFVIFLGDDEIEKQEVTLKEMSTGDQSEVSMSQLVEVLQEKLNGGKIYE</sequence>
<protein>
    <recommendedName>
        <fullName evidence="1">Histidine--tRNA ligase</fullName>
        <ecNumber evidence="1">6.1.1.21</ecNumber>
    </recommendedName>
    <alternativeName>
        <fullName evidence="1">Histidyl-tRNA synthetase</fullName>
        <shortName evidence="1">HisRS</shortName>
    </alternativeName>
</protein>
<accession>Q8EPR9</accession>
<keyword id="KW-0030">Aminoacyl-tRNA synthetase</keyword>
<keyword id="KW-0067">ATP-binding</keyword>
<keyword id="KW-0963">Cytoplasm</keyword>
<keyword id="KW-0436">Ligase</keyword>
<keyword id="KW-0547">Nucleotide-binding</keyword>
<keyword id="KW-0648">Protein biosynthesis</keyword>
<keyword id="KW-1185">Reference proteome</keyword>
<proteinExistence type="inferred from homology"/>
<name>SYH_OCEIH</name>